<feature type="chain" id="PRO_0000430103" description="DEAD-box ATP-dependent RNA helicase CshC">
    <location>
        <begin position="1"/>
        <end position="389"/>
    </location>
</feature>
<feature type="domain" description="Helicase ATP-binding" evidence="1">
    <location>
        <begin position="29"/>
        <end position="199"/>
    </location>
</feature>
<feature type="domain" description="Helicase C-terminal" evidence="2">
    <location>
        <begin position="209"/>
        <end position="379"/>
    </location>
</feature>
<feature type="region of interest" description="Disordered" evidence="3">
    <location>
        <begin position="368"/>
        <end position="389"/>
    </location>
</feature>
<feature type="short sequence motif" description="Q motif">
    <location>
        <begin position="1"/>
        <end position="26"/>
    </location>
</feature>
<feature type="short sequence motif" description="DEAD box">
    <location>
        <begin position="147"/>
        <end position="150"/>
    </location>
</feature>
<feature type="compositionally biased region" description="Basic residues" evidence="3">
    <location>
        <begin position="373"/>
        <end position="389"/>
    </location>
</feature>
<feature type="binding site" evidence="1">
    <location>
        <begin position="42"/>
        <end position="49"/>
    </location>
    <ligand>
        <name>ATP</name>
        <dbReference type="ChEBI" id="CHEBI:30616"/>
    </ligand>
</feature>
<gene>
    <name type="primary">cshC</name>
    <name type="ordered locus">BC_2103</name>
</gene>
<protein>
    <recommendedName>
        <fullName>DEAD-box ATP-dependent RNA helicase CshC</fullName>
        <ecNumber>3.6.4.13</ecNumber>
    </recommendedName>
</protein>
<keyword id="KW-0067">ATP-binding</keyword>
<keyword id="KW-0347">Helicase</keyword>
<keyword id="KW-0378">Hydrolase</keyword>
<keyword id="KW-0547">Nucleotide-binding</keyword>
<keyword id="KW-1185">Reference proteome</keyword>
<keyword id="KW-0346">Stress response</keyword>
<evidence type="ECO:0000255" key="1">
    <source>
        <dbReference type="PROSITE-ProRule" id="PRU00541"/>
    </source>
</evidence>
<evidence type="ECO:0000255" key="2">
    <source>
        <dbReference type="PROSITE-ProRule" id="PRU00542"/>
    </source>
</evidence>
<evidence type="ECO:0000256" key="3">
    <source>
        <dbReference type="SAM" id="MobiDB-lite"/>
    </source>
</evidence>
<evidence type="ECO:0000269" key="4">
    <source>
    </source>
</evidence>
<evidence type="ECO:0000269" key="5">
    <source>
    </source>
</evidence>
<sequence length="389" mass="44067">MIKDMQPFLQQAWEKAGFKELTEIQKQAIPTILEGQDVIAESPTGTGKTLAYLLPLLHKINPEVKQPQVVVLAPTRELVMQIHEEVQKFTAGTEISGASLIGGADIKRQVEKLKKHPRVIVGSPGRILELIRMKKLKMHEVKTIVFDEFDQIVKQKMMGAVQDVIKSTMRDRQLVFFSATMTKAAEDAARDLAVEPQLVRVTRAESKSLVEHTYIICERREKNDYVRRIMHMGDVKAVAFLNDPFRLDEITEKLKFRKMKAAALHAEASKQEREATMRAFRGGKLEILLATDIAARGIDIDDLTHVIHLELPDTVDQYIHRSGRTGRMGKEGTVVSLVTPQEERKLLQFAKKLGIVFTKQEMFKGSFVETKPKAPKKKKPAFTGKKKPR</sequence>
<name>CSHC_BACCR</name>
<reference key="1">
    <citation type="journal article" date="2003" name="Nature">
        <title>Genome sequence of Bacillus cereus and comparative analysis with Bacillus anthracis.</title>
        <authorList>
            <person name="Ivanova N."/>
            <person name="Sorokin A."/>
            <person name="Anderson I."/>
            <person name="Galleron N."/>
            <person name="Candelon B."/>
            <person name="Kapatral V."/>
            <person name="Bhattacharyya A."/>
            <person name="Reznik G."/>
            <person name="Mikhailova N."/>
            <person name="Lapidus A."/>
            <person name="Chu L."/>
            <person name="Mazur M."/>
            <person name="Goltsman E."/>
            <person name="Larsen N."/>
            <person name="D'Souza M."/>
            <person name="Walunas T."/>
            <person name="Grechkin Y."/>
            <person name="Pusch G."/>
            <person name="Haselkorn R."/>
            <person name="Fonstein M."/>
            <person name="Ehrlich S.D."/>
            <person name="Overbeek R."/>
            <person name="Kyrpides N.C."/>
        </authorList>
    </citation>
    <scope>NUCLEOTIDE SEQUENCE [LARGE SCALE GENOMIC DNA]</scope>
    <source>
        <strain>ATCC 14579 / DSM 31 / CCUG 7414 / JCM 2152 / NBRC 15305 / NCIMB 9373 / NCTC 2599 / NRRL B-3711</strain>
    </source>
</reference>
<reference key="2">
    <citation type="journal article" date="2010" name="Appl. Environ. Microbiol.">
        <title>Differential involvement of the five RNA helicases in adaptation of Bacillus cereus ATCC 14579 to low growth temperatures.</title>
        <authorList>
            <person name="Pandiani F."/>
            <person name="Brillard J."/>
            <person name="Bornard I."/>
            <person name="Michaud C."/>
            <person name="Chamot S."/>
            <person name="Nguyen-the C."/>
            <person name="Broussolle V."/>
        </authorList>
    </citation>
    <scope>INDUCTION</scope>
    <scope>DISRUPTION PHENOTYPE</scope>
    <source>
        <strain>ATCC 14579 / DSM 31 / CCUG 7414 / JCM 2152 / NBRC 15305 / NCIMB 9373 / NCTC 2599 / NRRL B-3711</strain>
    </source>
</reference>
<reference key="3">
    <citation type="journal article" date="2011" name="Appl. Environ. Microbiol.">
        <title>Role of the five RNA helicases in the adaptive response of Bacillus cereus ATCC 14579 cells to temperature, pH, and oxidative stresses.</title>
        <authorList>
            <person name="Pandiani F."/>
            <person name="Chamot S."/>
            <person name="Brillard J."/>
            <person name="Carlin F."/>
            <person name="Nguyen-the C."/>
            <person name="Broussolle V."/>
        </authorList>
    </citation>
    <scope>FUNCTION</scope>
    <scope>INDUCTION</scope>
    <scope>DISRUPTION PHENOTYPE</scope>
    <source>
        <strain>ATCC 14579 / DSM 31 / CCUG 7414 / JCM 2152 / NBRC 15305 / NCIMB 9373 / NCTC 2599 / NRRL B-3711</strain>
    </source>
</reference>
<dbReference type="EC" id="3.6.4.13"/>
<dbReference type="EMBL" id="AE016877">
    <property type="protein sequence ID" value="AAP09072.1"/>
    <property type="molecule type" value="Genomic_DNA"/>
</dbReference>
<dbReference type="RefSeq" id="NP_831871.1">
    <property type="nucleotide sequence ID" value="NC_004722.1"/>
</dbReference>
<dbReference type="RefSeq" id="WP_000588613.1">
    <property type="nucleotide sequence ID" value="NZ_CP138336.1"/>
</dbReference>
<dbReference type="SMR" id="Q81E85"/>
<dbReference type="STRING" id="226900.BC_2103"/>
<dbReference type="KEGG" id="bce:BC2103"/>
<dbReference type="PATRIC" id="fig|226900.8.peg.2118"/>
<dbReference type="HOGENOM" id="CLU_003041_1_3_9"/>
<dbReference type="OrthoDB" id="9805696at2"/>
<dbReference type="Proteomes" id="UP000001417">
    <property type="component" value="Chromosome"/>
</dbReference>
<dbReference type="GO" id="GO:0005829">
    <property type="term" value="C:cytosol"/>
    <property type="evidence" value="ECO:0000318"/>
    <property type="project" value="GO_Central"/>
</dbReference>
<dbReference type="GO" id="GO:0005524">
    <property type="term" value="F:ATP binding"/>
    <property type="evidence" value="ECO:0007669"/>
    <property type="project" value="UniProtKB-KW"/>
</dbReference>
<dbReference type="GO" id="GO:0016887">
    <property type="term" value="F:ATP hydrolysis activity"/>
    <property type="evidence" value="ECO:0007669"/>
    <property type="project" value="RHEA"/>
</dbReference>
<dbReference type="GO" id="GO:0003724">
    <property type="term" value="F:RNA helicase activity"/>
    <property type="evidence" value="ECO:0000318"/>
    <property type="project" value="GO_Central"/>
</dbReference>
<dbReference type="GO" id="GO:0033592">
    <property type="term" value="F:RNA strand annealing activity"/>
    <property type="evidence" value="ECO:0000318"/>
    <property type="project" value="GO_Central"/>
</dbReference>
<dbReference type="GO" id="GO:0009409">
    <property type="term" value="P:response to cold"/>
    <property type="evidence" value="ECO:0000318"/>
    <property type="project" value="GO_Central"/>
</dbReference>
<dbReference type="CDD" id="cd00268">
    <property type="entry name" value="DEADc"/>
    <property type="match status" value="1"/>
</dbReference>
<dbReference type="CDD" id="cd18787">
    <property type="entry name" value="SF2_C_DEAD"/>
    <property type="match status" value="1"/>
</dbReference>
<dbReference type="Gene3D" id="3.40.50.300">
    <property type="entry name" value="P-loop containing nucleotide triphosphate hydrolases"/>
    <property type="match status" value="2"/>
</dbReference>
<dbReference type="InterPro" id="IPR011545">
    <property type="entry name" value="DEAD/DEAH_box_helicase_dom"/>
</dbReference>
<dbReference type="InterPro" id="IPR050547">
    <property type="entry name" value="DEAD_box_RNA_helicases"/>
</dbReference>
<dbReference type="InterPro" id="IPR014001">
    <property type="entry name" value="Helicase_ATP-bd"/>
</dbReference>
<dbReference type="InterPro" id="IPR001650">
    <property type="entry name" value="Helicase_C-like"/>
</dbReference>
<dbReference type="InterPro" id="IPR027417">
    <property type="entry name" value="P-loop_NTPase"/>
</dbReference>
<dbReference type="PANTHER" id="PTHR47963:SF7">
    <property type="entry name" value="ATP-DEPENDENT RNA HELICASE YFML-RELATED"/>
    <property type="match status" value="1"/>
</dbReference>
<dbReference type="PANTHER" id="PTHR47963">
    <property type="entry name" value="DEAD-BOX ATP-DEPENDENT RNA HELICASE 47, MITOCHONDRIAL"/>
    <property type="match status" value="1"/>
</dbReference>
<dbReference type="Pfam" id="PF00270">
    <property type="entry name" value="DEAD"/>
    <property type="match status" value="1"/>
</dbReference>
<dbReference type="Pfam" id="PF00271">
    <property type="entry name" value="Helicase_C"/>
    <property type="match status" value="1"/>
</dbReference>
<dbReference type="SMART" id="SM00487">
    <property type="entry name" value="DEXDc"/>
    <property type="match status" value="1"/>
</dbReference>
<dbReference type="SMART" id="SM00490">
    <property type="entry name" value="HELICc"/>
    <property type="match status" value="1"/>
</dbReference>
<dbReference type="SUPFAM" id="SSF52540">
    <property type="entry name" value="P-loop containing nucleoside triphosphate hydrolases"/>
    <property type="match status" value="1"/>
</dbReference>
<dbReference type="PROSITE" id="PS51192">
    <property type="entry name" value="HELICASE_ATP_BIND_1"/>
    <property type="match status" value="1"/>
</dbReference>
<dbReference type="PROSITE" id="PS51194">
    <property type="entry name" value="HELICASE_CTER"/>
    <property type="match status" value="1"/>
</dbReference>
<dbReference type="PROSITE" id="PS51195">
    <property type="entry name" value="Q_MOTIF"/>
    <property type="match status" value="1"/>
</dbReference>
<comment type="function">
    <text evidence="5">DEAD-box RNA helicase. Probably has an RNA-dependent ATPase activity and a 3' to 5' RNA helicase activity that uses the energy of ATP hydrolysis to destabilize and unwind short RNA duplexes.</text>
</comment>
<comment type="catalytic activity">
    <reaction>
        <text>ATP + H2O = ADP + phosphate + H(+)</text>
        <dbReference type="Rhea" id="RHEA:13065"/>
        <dbReference type="ChEBI" id="CHEBI:15377"/>
        <dbReference type="ChEBI" id="CHEBI:15378"/>
        <dbReference type="ChEBI" id="CHEBI:30616"/>
        <dbReference type="ChEBI" id="CHEBI:43474"/>
        <dbReference type="ChEBI" id="CHEBI:456216"/>
        <dbReference type="EC" id="3.6.4.13"/>
    </reaction>
</comment>
<comment type="induction">
    <text evidence="4 5">Induced at 10 degrees Celsius.</text>
</comment>
<comment type="disruption phenotype">
    <text evidence="4 5">Longer lag phase at 20 degrees Celsius, wild-type growth rate at 30 degrees Celsius, no growth at 10 degrees Celsius. At 12 degrees Celsius cells were short and stocky, by transmission electron microscopy the cytoplasm appears empty although cells are viable. Decreased growth in the presence of H(2)O(2) and diamide.</text>
</comment>
<proteinExistence type="evidence at transcript level"/>
<accession>Q81E85</accession>
<organism>
    <name type="scientific">Bacillus cereus (strain ATCC 14579 / DSM 31 / CCUG 7414 / JCM 2152 / NBRC 15305 / NCIMB 9373 / NCTC 2599 / NRRL B-3711)</name>
    <dbReference type="NCBI Taxonomy" id="226900"/>
    <lineage>
        <taxon>Bacteria</taxon>
        <taxon>Bacillati</taxon>
        <taxon>Bacillota</taxon>
        <taxon>Bacilli</taxon>
        <taxon>Bacillales</taxon>
        <taxon>Bacillaceae</taxon>
        <taxon>Bacillus</taxon>
        <taxon>Bacillus cereus group</taxon>
    </lineage>
</organism>